<keyword id="KW-0007">Acetylation</keyword>
<keyword id="KW-0156">Chromatin regulator</keyword>
<keyword id="KW-0963">Cytoplasm</keyword>
<keyword id="KW-0479">Metal-binding</keyword>
<keyword id="KW-0489">Methyltransferase</keyword>
<keyword id="KW-0539">Nucleus</keyword>
<keyword id="KW-1185">Reference proteome</keyword>
<keyword id="KW-0949">S-adenosyl-L-methionine</keyword>
<keyword id="KW-0808">Transferase</keyword>
<keyword id="KW-0862">Zinc</keyword>
<keyword id="KW-0863">Zinc-finger</keyword>
<dbReference type="EC" id="2.1.1.354" evidence="1 4"/>
<dbReference type="EMBL" id="AK010447">
    <property type="protein sequence ID" value="BAB26947.1"/>
    <property type="molecule type" value="mRNA"/>
</dbReference>
<dbReference type="EMBL" id="AK044168">
    <property type="protein sequence ID" value="BAC31804.1"/>
    <property type="molecule type" value="mRNA"/>
</dbReference>
<dbReference type="EMBL" id="AK046829">
    <property type="protein sequence ID" value="BAC32887.1"/>
    <property type="molecule type" value="mRNA"/>
</dbReference>
<dbReference type="EMBL" id="BC052431">
    <property type="protein sequence ID" value="AAH52431.1"/>
    <property type="molecule type" value="mRNA"/>
</dbReference>
<dbReference type="EMBL" id="BC061485">
    <property type="protein sequence ID" value="AAH61485.1"/>
    <property type="molecule type" value="mRNA"/>
</dbReference>
<dbReference type="CCDS" id="CCDS15560.1"/>
<dbReference type="RefSeq" id="NP_081464.1">
    <property type="nucleotide sequence ID" value="NM_027188.4"/>
</dbReference>
<dbReference type="RefSeq" id="XP_006497045.1">
    <property type="nucleotide sequence ID" value="XM_006496982.3"/>
</dbReference>
<dbReference type="RefSeq" id="XP_017167700.1">
    <property type="nucleotide sequence ID" value="XM_017312211.1"/>
</dbReference>
<dbReference type="RefSeq" id="XP_017167702.1">
    <property type="nucleotide sequence ID" value="XM_017312213.1"/>
</dbReference>
<dbReference type="SMR" id="Q9CWR2"/>
<dbReference type="BioGRID" id="213640">
    <property type="interactions" value="2"/>
</dbReference>
<dbReference type="FunCoup" id="Q9CWR2">
    <property type="interactions" value="2602"/>
</dbReference>
<dbReference type="IntAct" id="Q9CWR2">
    <property type="interactions" value="4"/>
</dbReference>
<dbReference type="MINT" id="Q9CWR2"/>
<dbReference type="STRING" id="10090.ENSMUSP00000117410"/>
<dbReference type="iPTMnet" id="Q9CWR2"/>
<dbReference type="PhosphoSitePlus" id="Q9CWR2"/>
<dbReference type="jPOST" id="Q9CWR2"/>
<dbReference type="PaxDb" id="10090-ENSMUSP00000117410"/>
<dbReference type="ProteomicsDB" id="261283"/>
<dbReference type="Pumba" id="Q9CWR2"/>
<dbReference type="Antibodypedia" id="34720">
    <property type="antibodies" value="289 antibodies from 37 providers"/>
</dbReference>
<dbReference type="DNASU" id="69726"/>
<dbReference type="Ensembl" id="ENSMUST00000128302.8">
    <property type="protein sequence ID" value="ENSMUSP00000117410.2"/>
    <property type="gene ID" value="ENSMUSG00000055067.16"/>
</dbReference>
<dbReference type="GeneID" id="69726"/>
<dbReference type="KEGG" id="mmu:69726"/>
<dbReference type="UCSC" id="uc007dvj.1">
    <property type="organism name" value="mouse"/>
</dbReference>
<dbReference type="AGR" id="MGI:1916976"/>
<dbReference type="CTD" id="64754"/>
<dbReference type="MGI" id="MGI:1916976">
    <property type="gene designation" value="Smyd3"/>
</dbReference>
<dbReference type="VEuPathDB" id="HostDB:ENSMUSG00000055067"/>
<dbReference type="eggNOG" id="KOG2084">
    <property type="taxonomic scope" value="Eukaryota"/>
</dbReference>
<dbReference type="GeneTree" id="ENSGT00940000156766"/>
<dbReference type="HOGENOM" id="CLU_018406_2_0_1"/>
<dbReference type="InParanoid" id="Q9CWR2"/>
<dbReference type="OMA" id="LHMKLGK"/>
<dbReference type="OrthoDB" id="265717at2759"/>
<dbReference type="PhylomeDB" id="Q9CWR2"/>
<dbReference type="TreeFam" id="TF106487"/>
<dbReference type="Reactome" id="R-MMU-3214841">
    <property type="pathway name" value="PKMTs methylate histone lysines"/>
</dbReference>
<dbReference type="BioGRID-ORCS" id="69726">
    <property type="hits" value="1 hit in 81 CRISPR screens"/>
</dbReference>
<dbReference type="ChiTaRS" id="Smyd3">
    <property type="organism name" value="mouse"/>
</dbReference>
<dbReference type="PRO" id="PR:Q9CWR2"/>
<dbReference type="Proteomes" id="UP000000589">
    <property type="component" value="Chromosome 1"/>
</dbReference>
<dbReference type="RNAct" id="Q9CWR2">
    <property type="molecule type" value="protein"/>
</dbReference>
<dbReference type="Bgee" id="ENSMUSG00000055067">
    <property type="expression patterns" value="Expressed in secondary oocyte and 165 other cell types or tissues"/>
</dbReference>
<dbReference type="ExpressionAtlas" id="Q9CWR2">
    <property type="expression patterns" value="baseline and differential"/>
</dbReference>
<dbReference type="GO" id="GO:0005829">
    <property type="term" value="C:cytosol"/>
    <property type="evidence" value="ECO:0007669"/>
    <property type="project" value="Ensembl"/>
</dbReference>
<dbReference type="GO" id="GO:0005654">
    <property type="term" value="C:nucleoplasm"/>
    <property type="evidence" value="ECO:0007669"/>
    <property type="project" value="Ensembl"/>
</dbReference>
<dbReference type="GO" id="GO:0005634">
    <property type="term" value="C:nucleus"/>
    <property type="evidence" value="ECO:0000314"/>
    <property type="project" value="MGI"/>
</dbReference>
<dbReference type="GO" id="GO:0140954">
    <property type="term" value="F:histone H3K36 dimethyltransferase activity"/>
    <property type="evidence" value="ECO:0000314"/>
    <property type="project" value="UniProtKB"/>
</dbReference>
<dbReference type="GO" id="GO:0140999">
    <property type="term" value="F:histone H3K4 trimethyltransferase activity"/>
    <property type="evidence" value="ECO:0007669"/>
    <property type="project" value="UniProtKB-EC"/>
</dbReference>
<dbReference type="GO" id="GO:0140939">
    <property type="term" value="F:histone H4 methyltransferase activity"/>
    <property type="evidence" value="ECO:0007669"/>
    <property type="project" value="Ensembl"/>
</dbReference>
<dbReference type="GO" id="GO:0000978">
    <property type="term" value="F:RNA polymerase II cis-regulatory region sequence-specific DNA binding"/>
    <property type="evidence" value="ECO:0000314"/>
    <property type="project" value="MGI"/>
</dbReference>
<dbReference type="GO" id="GO:0000993">
    <property type="term" value="F:RNA polymerase II complex binding"/>
    <property type="evidence" value="ECO:0000314"/>
    <property type="project" value="MGI"/>
</dbReference>
<dbReference type="GO" id="GO:0001162">
    <property type="term" value="F:RNA polymerase II intronic transcription regulatory region sequence-specific DNA binding"/>
    <property type="evidence" value="ECO:0000314"/>
    <property type="project" value="MGI"/>
</dbReference>
<dbReference type="GO" id="GO:0008270">
    <property type="term" value="F:zinc ion binding"/>
    <property type="evidence" value="ECO:0007669"/>
    <property type="project" value="UniProtKB-KW"/>
</dbReference>
<dbReference type="GO" id="GO:0071549">
    <property type="term" value="P:cellular response to dexamethasone stimulus"/>
    <property type="evidence" value="ECO:0000314"/>
    <property type="project" value="MGI"/>
</dbReference>
<dbReference type="GO" id="GO:0045184">
    <property type="term" value="P:establishment of protein localization"/>
    <property type="evidence" value="ECO:0000315"/>
    <property type="project" value="MGI"/>
</dbReference>
<dbReference type="GO" id="GO:0032259">
    <property type="term" value="P:methylation"/>
    <property type="evidence" value="ECO:0007669"/>
    <property type="project" value="UniProtKB-KW"/>
</dbReference>
<dbReference type="GO" id="GO:0014904">
    <property type="term" value="P:myotube cell development"/>
    <property type="evidence" value="ECO:0000315"/>
    <property type="project" value="MGI"/>
</dbReference>
<dbReference type="GO" id="GO:0006334">
    <property type="term" value="P:nucleosome assembly"/>
    <property type="evidence" value="ECO:0000315"/>
    <property type="project" value="MGI"/>
</dbReference>
<dbReference type="GO" id="GO:0045944">
    <property type="term" value="P:positive regulation of transcription by RNA polymerase II"/>
    <property type="evidence" value="ECO:0000315"/>
    <property type="project" value="MGI"/>
</dbReference>
<dbReference type="CDD" id="cd19203">
    <property type="entry name" value="SET_SMYD3"/>
    <property type="match status" value="1"/>
</dbReference>
<dbReference type="FunFam" id="2.170.270.10:FF:000013">
    <property type="entry name" value="Histone-lysine N-methyltransferase SMYD1 isoform 1"/>
    <property type="match status" value="1"/>
</dbReference>
<dbReference type="FunFam" id="1.10.220.160:FF:000003">
    <property type="entry name" value="Histone-lysine N-methyltransferase SMYD3"/>
    <property type="match status" value="1"/>
</dbReference>
<dbReference type="FunFam" id="1.25.40.10:FF:000262">
    <property type="entry name" value="Histone-lysine N-methyltransferase SMYD3"/>
    <property type="match status" value="1"/>
</dbReference>
<dbReference type="FunFam" id="1.25.40.970:FF:000003">
    <property type="entry name" value="Histone-lysine N-methyltransferase SMYD3"/>
    <property type="match status" value="1"/>
</dbReference>
<dbReference type="FunFam" id="6.10.140.2220:FF:000017">
    <property type="entry name" value="Histone-lysine N-methyltransferase SMYD3"/>
    <property type="match status" value="1"/>
</dbReference>
<dbReference type="Gene3D" id="1.10.220.160">
    <property type="match status" value="1"/>
</dbReference>
<dbReference type="Gene3D" id="1.25.40.970">
    <property type="match status" value="1"/>
</dbReference>
<dbReference type="Gene3D" id="6.10.140.2220">
    <property type="match status" value="1"/>
</dbReference>
<dbReference type="Gene3D" id="2.170.270.10">
    <property type="entry name" value="SET domain"/>
    <property type="match status" value="1"/>
</dbReference>
<dbReference type="Gene3D" id="1.25.40.10">
    <property type="entry name" value="Tetratricopeptide repeat domain"/>
    <property type="match status" value="1"/>
</dbReference>
<dbReference type="InterPro" id="IPR050869">
    <property type="entry name" value="H3K4_H4K5_MeTrfase"/>
</dbReference>
<dbReference type="InterPro" id="IPR025805">
    <property type="entry name" value="Hist-Lys_N-MeTrfase_SMYD3"/>
</dbReference>
<dbReference type="InterPro" id="IPR001214">
    <property type="entry name" value="SET_dom"/>
</dbReference>
<dbReference type="InterPro" id="IPR046341">
    <property type="entry name" value="SET_dom_sf"/>
</dbReference>
<dbReference type="InterPro" id="IPR044420">
    <property type="entry name" value="SMYD3_SET"/>
</dbReference>
<dbReference type="InterPro" id="IPR011990">
    <property type="entry name" value="TPR-like_helical_dom_sf"/>
</dbReference>
<dbReference type="InterPro" id="IPR002893">
    <property type="entry name" value="Znf_MYND"/>
</dbReference>
<dbReference type="PANTHER" id="PTHR12197">
    <property type="entry name" value="HISTONE-LYSINE N-METHYLTRANSFERASE SMYD"/>
    <property type="match status" value="1"/>
</dbReference>
<dbReference type="PANTHER" id="PTHR12197:SF288">
    <property type="entry name" value="HISTONE-LYSINE N-METHYLTRANSFERASE SMYD3"/>
    <property type="match status" value="1"/>
</dbReference>
<dbReference type="Pfam" id="PF00856">
    <property type="entry name" value="SET"/>
    <property type="match status" value="1"/>
</dbReference>
<dbReference type="Pfam" id="PF01753">
    <property type="entry name" value="zf-MYND"/>
    <property type="match status" value="1"/>
</dbReference>
<dbReference type="SMART" id="SM00317">
    <property type="entry name" value="SET"/>
    <property type="match status" value="1"/>
</dbReference>
<dbReference type="SUPFAM" id="SSF82199">
    <property type="entry name" value="SET domain"/>
    <property type="match status" value="1"/>
</dbReference>
<dbReference type="PROSITE" id="PS51574">
    <property type="entry name" value="SAM_MT43_2"/>
    <property type="match status" value="1"/>
</dbReference>
<dbReference type="PROSITE" id="PS50280">
    <property type="entry name" value="SET"/>
    <property type="match status" value="1"/>
</dbReference>
<dbReference type="PROSITE" id="PS01360">
    <property type="entry name" value="ZF_MYND_1"/>
    <property type="match status" value="1"/>
</dbReference>
<dbReference type="PROSITE" id="PS50865">
    <property type="entry name" value="ZF_MYND_2"/>
    <property type="match status" value="1"/>
</dbReference>
<protein>
    <recommendedName>
        <fullName>Histone-lysine N-methyltransferase SMYD3</fullName>
        <ecNumber evidence="1 4">2.1.1.354</ecNumber>
    </recommendedName>
    <alternativeName>
        <fullName>SET and MYND domain-containing protein 3</fullName>
    </alternativeName>
    <alternativeName>
        <fullName>Zinc finger MYND domain-containing protein 1</fullName>
    </alternativeName>
</protein>
<accession>Q9CWR2</accession>
<accession>Q6P7V6</accession>
<accession>Q8BG90</accession>
<evidence type="ECO:0000250" key="1">
    <source>
        <dbReference type="UniProtKB" id="Q9H7B4"/>
    </source>
</evidence>
<evidence type="ECO:0000255" key="2">
    <source>
        <dbReference type="PROSITE-ProRule" id="PRU00134"/>
    </source>
</evidence>
<evidence type="ECO:0000255" key="3">
    <source>
        <dbReference type="PROSITE-ProRule" id="PRU00190"/>
    </source>
</evidence>
<evidence type="ECO:0000255" key="4">
    <source>
        <dbReference type="PROSITE-ProRule" id="PRU00907"/>
    </source>
</evidence>
<evidence type="ECO:0000305" key="5"/>
<reference key="1">
    <citation type="journal article" date="2005" name="Science">
        <title>The transcriptional landscape of the mammalian genome.</title>
        <authorList>
            <person name="Carninci P."/>
            <person name="Kasukawa T."/>
            <person name="Katayama S."/>
            <person name="Gough J."/>
            <person name="Frith M.C."/>
            <person name="Maeda N."/>
            <person name="Oyama R."/>
            <person name="Ravasi T."/>
            <person name="Lenhard B."/>
            <person name="Wells C."/>
            <person name="Kodzius R."/>
            <person name="Shimokawa K."/>
            <person name="Bajic V.B."/>
            <person name="Brenner S.E."/>
            <person name="Batalov S."/>
            <person name="Forrest A.R."/>
            <person name="Zavolan M."/>
            <person name="Davis M.J."/>
            <person name="Wilming L.G."/>
            <person name="Aidinis V."/>
            <person name="Allen J.E."/>
            <person name="Ambesi-Impiombato A."/>
            <person name="Apweiler R."/>
            <person name="Aturaliya R.N."/>
            <person name="Bailey T.L."/>
            <person name="Bansal M."/>
            <person name="Baxter L."/>
            <person name="Beisel K.W."/>
            <person name="Bersano T."/>
            <person name="Bono H."/>
            <person name="Chalk A.M."/>
            <person name="Chiu K.P."/>
            <person name="Choudhary V."/>
            <person name="Christoffels A."/>
            <person name="Clutterbuck D.R."/>
            <person name="Crowe M.L."/>
            <person name="Dalla E."/>
            <person name="Dalrymple B.P."/>
            <person name="de Bono B."/>
            <person name="Della Gatta G."/>
            <person name="di Bernardo D."/>
            <person name="Down T."/>
            <person name="Engstrom P."/>
            <person name="Fagiolini M."/>
            <person name="Faulkner G."/>
            <person name="Fletcher C.F."/>
            <person name="Fukushima T."/>
            <person name="Furuno M."/>
            <person name="Futaki S."/>
            <person name="Gariboldi M."/>
            <person name="Georgii-Hemming P."/>
            <person name="Gingeras T.R."/>
            <person name="Gojobori T."/>
            <person name="Green R.E."/>
            <person name="Gustincich S."/>
            <person name="Harbers M."/>
            <person name="Hayashi Y."/>
            <person name="Hensch T.K."/>
            <person name="Hirokawa N."/>
            <person name="Hill D."/>
            <person name="Huminiecki L."/>
            <person name="Iacono M."/>
            <person name="Ikeo K."/>
            <person name="Iwama A."/>
            <person name="Ishikawa T."/>
            <person name="Jakt M."/>
            <person name="Kanapin A."/>
            <person name="Katoh M."/>
            <person name="Kawasawa Y."/>
            <person name="Kelso J."/>
            <person name="Kitamura H."/>
            <person name="Kitano H."/>
            <person name="Kollias G."/>
            <person name="Krishnan S.P."/>
            <person name="Kruger A."/>
            <person name="Kummerfeld S.K."/>
            <person name="Kurochkin I.V."/>
            <person name="Lareau L.F."/>
            <person name="Lazarevic D."/>
            <person name="Lipovich L."/>
            <person name="Liu J."/>
            <person name="Liuni S."/>
            <person name="McWilliam S."/>
            <person name="Madan Babu M."/>
            <person name="Madera M."/>
            <person name="Marchionni L."/>
            <person name="Matsuda H."/>
            <person name="Matsuzawa S."/>
            <person name="Miki H."/>
            <person name="Mignone F."/>
            <person name="Miyake S."/>
            <person name="Morris K."/>
            <person name="Mottagui-Tabar S."/>
            <person name="Mulder N."/>
            <person name="Nakano N."/>
            <person name="Nakauchi H."/>
            <person name="Ng P."/>
            <person name="Nilsson R."/>
            <person name="Nishiguchi S."/>
            <person name="Nishikawa S."/>
            <person name="Nori F."/>
            <person name="Ohara O."/>
            <person name="Okazaki Y."/>
            <person name="Orlando V."/>
            <person name="Pang K.C."/>
            <person name="Pavan W.J."/>
            <person name="Pavesi G."/>
            <person name="Pesole G."/>
            <person name="Petrovsky N."/>
            <person name="Piazza S."/>
            <person name="Reed J."/>
            <person name="Reid J.F."/>
            <person name="Ring B.Z."/>
            <person name="Ringwald M."/>
            <person name="Rost B."/>
            <person name="Ruan Y."/>
            <person name="Salzberg S.L."/>
            <person name="Sandelin A."/>
            <person name="Schneider C."/>
            <person name="Schoenbach C."/>
            <person name="Sekiguchi K."/>
            <person name="Semple C.A."/>
            <person name="Seno S."/>
            <person name="Sessa L."/>
            <person name="Sheng Y."/>
            <person name="Shibata Y."/>
            <person name="Shimada H."/>
            <person name="Shimada K."/>
            <person name="Silva D."/>
            <person name="Sinclair B."/>
            <person name="Sperling S."/>
            <person name="Stupka E."/>
            <person name="Sugiura K."/>
            <person name="Sultana R."/>
            <person name="Takenaka Y."/>
            <person name="Taki K."/>
            <person name="Tammoja K."/>
            <person name="Tan S.L."/>
            <person name="Tang S."/>
            <person name="Taylor M.S."/>
            <person name="Tegner J."/>
            <person name="Teichmann S.A."/>
            <person name="Ueda H.R."/>
            <person name="van Nimwegen E."/>
            <person name="Verardo R."/>
            <person name="Wei C.L."/>
            <person name="Yagi K."/>
            <person name="Yamanishi H."/>
            <person name="Zabarovsky E."/>
            <person name="Zhu S."/>
            <person name="Zimmer A."/>
            <person name="Hide W."/>
            <person name="Bult C."/>
            <person name="Grimmond S.M."/>
            <person name="Teasdale R.D."/>
            <person name="Liu E.T."/>
            <person name="Brusic V."/>
            <person name="Quackenbush J."/>
            <person name="Wahlestedt C."/>
            <person name="Mattick J.S."/>
            <person name="Hume D.A."/>
            <person name="Kai C."/>
            <person name="Sasaki D."/>
            <person name="Tomaru Y."/>
            <person name="Fukuda S."/>
            <person name="Kanamori-Katayama M."/>
            <person name="Suzuki M."/>
            <person name="Aoki J."/>
            <person name="Arakawa T."/>
            <person name="Iida J."/>
            <person name="Imamura K."/>
            <person name="Itoh M."/>
            <person name="Kato T."/>
            <person name="Kawaji H."/>
            <person name="Kawagashira N."/>
            <person name="Kawashima T."/>
            <person name="Kojima M."/>
            <person name="Kondo S."/>
            <person name="Konno H."/>
            <person name="Nakano K."/>
            <person name="Ninomiya N."/>
            <person name="Nishio T."/>
            <person name="Okada M."/>
            <person name="Plessy C."/>
            <person name="Shibata K."/>
            <person name="Shiraki T."/>
            <person name="Suzuki S."/>
            <person name="Tagami M."/>
            <person name="Waki K."/>
            <person name="Watahiki A."/>
            <person name="Okamura-Oho Y."/>
            <person name="Suzuki H."/>
            <person name="Kawai J."/>
            <person name="Hayashizaki Y."/>
        </authorList>
    </citation>
    <scope>NUCLEOTIDE SEQUENCE [LARGE SCALE MRNA]</scope>
    <source>
        <strain>C57BL/6J</strain>
        <tissue>Brain cortex</tissue>
        <tissue>Embryonic stem cell</tissue>
        <tissue>Medulla oblongata</tissue>
    </source>
</reference>
<reference key="2">
    <citation type="journal article" date="2004" name="Genome Res.">
        <title>The status, quality, and expansion of the NIH full-length cDNA project: the Mammalian Gene Collection (MGC).</title>
        <authorList>
            <consortium name="The MGC Project Team"/>
        </authorList>
    </citation>
    <scope>NUCLEOTIDE SEQUENCE [LARGE SCALE MRNA]</scope>
    <source>
        <strain>C57BL/6J</strain>
        <strain>FVB/N-3</strain>
        <tissue>Brain</tissue>
        <tissue>Mammary tumor</tissue>
    </source>
</reference>
<proteinExistence type="evidence at transcript level"/>
<comment type="function">
    <text evidence="1">Histone methyltransferase. Specifically methylates 'Lys-4' of histone H3, inducing di- and tri-methylation, but not monomethylation. Also methylates 'Lys-5' of histone H4. Plays an important role in transcriptional activation as a member of an RNA polymerase complex. Binds DNA containing 5'-CCCTCC-3' or 5'-GAGGGG-3' sequences.</text>
</comment>
<comment type="catalytic activity">
    <reaction evidence="1 4">
        <text>L-lysyl(4)-[histone H3] + 3 S-adenosyl-L-methionine = N(6),N(6),N(6)-trimethyl-L-lysyl(4)-[histone H3] + 3 S-adenosyl-L-homocysteine + 3 H(+)</text>
        <dbReference type="Rhea" id="RHEA:60260"/>
        <dbReference type="Rhea" id="RHEA-COMP:15537"/>
        <dbReference type="Rhea" id="RHEA-COMP:15547"/>
        <dbReference type="ChEBI" id="CHEBI:15378"/>
        <dbReference type="ChEBI" id="CHEBI:29969"/>
        <dbReference type="ChEBI" id="CHEBI:57856"/>
        <dbReference type="ChEBI" id="CHEBI:59789"/>
        <dbReference type="ChEBI" id="CHEBI:61961"/>
        <dbReference type="EC" id="2.1.1.354"/>
    </reaction>
</comment>
<comment type="activity regulation">
    <text evidence="1">Histone methyltransferase activity strongly stimulated by HSPCA.</text>
</comment>
<comment type="subunit">
    <text evidence="1">Interacts with HSPCA. Interacts with HELZ. Interacts with POLR2A; the interaction may be indirect and may be mediated by HELZ. Interacts with HSP90AA1; this interaction enhances SMYD3 histone-lysine N-methyltransferase.</text>
</comment>
<comment type="subcellular location">
    <subcellularLocation>
        <location evidence="1">Cytoplasm</location>
    </subcellularLocation>
    <subcellularLocation>
        <location evidence="1">Nucleus</location>
    </subcellularLocation>
    <text evidence="1">Mainly cytoplasmic when cells are arrested at G0/G1. Accumulates in the nucleus at S phase and G2/M.</text>
</comment>
<comment type="similarity">
    <text evidence="4">Belongs to the class V-like SAM-binding methyltransferase superfamily. Histone-lysine methyltransferase family.</text>
</comment>
<organism>
    <name type="scientific">Mus musculus</name>
    <name type="common">Mouse</name>
    <dbReference type="NCBI Taxonomy" id="10090"/>
    <lineage>
        <taxon>Eukaryota</taxon>
        <taxon>Metazoa</taxon>
        <taxon>Chordata</taxon>
        <taxon>Craniata</taxon>
        <taxon>Vertebrata</taxon>
        <taxon>Euteleostomi</taxon>
        <taxon>Mammalia</taxon>
        <taxon>Eutheria</taxon>
        <taxon>Euarchontoglires</taxon>
        <taxon>Glires</taxon>
        <taxon>Rodentia</taxon>
        <taxon>Myomorpha</taxon>
        <taxon>Muroidea</taxon>
        <taxon>Muridae</taxon>
        <taxon>Murinae</taxon>
        <taxon>Mus</taxon>
        <taxon>Mus</taxon>
    </lineage>
</organism>
<feature type="chain" id="PRO_0000218313" description="Histone-lysine N-methyltransferase SMYD3">
    <location>
        <begin position="1"/>
        <end position="428"/>
    </location>
</feature>
<feature type="domain" description="SET" evidence="3">
    <location>
        <begin position="4"/>
        <end position="240"/>
    </location>
</feature>
<feature type="zinc finger region" description="MYND-type" evidence="2">
    <location>
        <begin position="49"/>
        <end position="87"/>
    </location>
</feature>
<feature type="region of interest" description="C-terminal domain; essential for histone methyltransferase activity, nuclear localization and mediates interaction with HSP90AA1" evidence="1">
    <location>
        <begin position="272"/>
        <end position="428"/>
    </location>
</feature>
<feature type="binding site" evidence="1">
    <location>
        <begin position="14"/>
        <end position="16"/>
    </location>
    <ligand>
        <name>S-adenosyl-L-methionine</name>
        <dbReference type="ChEBI" id="CHEBI:59789"/>
    </ligand>
</feature>
<feature type="binding site" evidence="2">
    <location>
        <position position="49"/>
    </location>
    <ligand>
        <name>Zn(2+)</name>
        <dbReference type="ChEBI" id="CHEBI:29105"/>
        <label>1</label>
    </ligand>
</feature>
<feature type="binding site" evidence="2">
    <location>
        <position position="52"/>
    </location>
    <ligand>
        <name>Zn(2+)</name>
        <dbReference type="ChEBI" id="CHEBI:29105"/>
        <label>1</label>
    </ligand>
</feature>
<feature type="binding site" evidence="2">
    <location>
        <position position="62"/>
    </location>
    <ligand>
        <name>Zn(2+)</name>
        <dbReference type="ChEBI" id="CHEBI:29105"/>
        <label>2</label>
    </ligand>
</feature>
<feature type="binding site" evidence="2">
    <location>
        <position position="65"/>
    </location>
    <ligand>
        <name>Zn(2+)</name>
        <dbReference type="ChEBI" id="CHEBI:29105"/>
        <label>2</label>
    </ligand>
</feature>
<feature type="binding site" evidence="2">
    <location>
        <position position="71"/>
    </location>
    <ligand>
        <name>Zn(2+)</name>
        <dbReference type="ChEBI" id="CHEBI:29105"/>
        <label>1</label>
    </ligand>
</feature>
<feature type="binding site" evidence="2">
    <location>
        <position position="75"/>
    </location>
    <ligand>
        <name>Zn(2+)</name>
        <dbReference type="ChEBI" id="CHEBI:29105"/>
        <label>1</label>
    </ligand>
</feature>
<feature type="binding site" evidence="2">
    <location>
        <position position="83"/>
    </location>
    <ligand>
        <name>Zn(2+)</name>
        <dbReference type="ChEBI" id="CHEBI:29105"/>
        <label>2</label>
    </ligand>
</feature>
<feature type="binding site" evidence="2">
    <location>
        <position position="87"/>
    </location>
    <ligand>
        <name>Zn(2+)</name>
        <dbReference type="ChEBI" id="CHEBI:29105"/>
        <label>2</label>
    </ligand>
</feature>
<feature type="binding site" evidence="3">
    <location>
        <position position="124"/>
    </location>
    <ligand>
        <name>S-adenosyl-L-methionine</name>
        <dbReference type="ChEBI" id="CHEBI:59789"/>
    </ligand>
</feature>
<feature type="binding site" evidence="3">
    <location>
        <position position="132"/>
    </location>
    <ligand>
        <name>S-adenosyl-L-methionine</name>
        <dbReference type="ChEBI" id="CHEBI:59789"/>
    </ligand>
</feature>
<feature type="binding site" evidence="1">
    <location>
        <begin position="205"/>
        <end position="206"/>
    </location>
    <ligand>
        <name>S-adenosyl-L-methionine</name>
        <dbReference type="ChEBI" id="CHEBI:59789"/>
    </ligand>
</feature>
<feature type="binding site" evidence="3">
    <location>
        <position position="239"/>
    </location>
    <ligand>
        <name>S-adenosyl-L-methionine</name>
        <dbReference type="ChEBI" id="CHEBI:59789"/>
    </ligand>
</feature>
<feature type="binding site" evidence="3">
    <location>
        <position position="259"/>
    </location>
    <ligand>
        <name>S-adenosyl-L-methionine</name>
        <dbReference type="ChEBI" id="CHEBI:59789"/>
    </ligand>
</feature>
<feature type="modified residue" description="N-acetylmethionine" evidence="1">
    <location>
        <position position="1"/>
    </location>
</feature>
<feature type="sequence conflict" description="In Ref. 2; AAH61485." evidence="5" ref="2">
    <original>N</original>
    <variation>D</variation>
    <location>
        <position position="318"/>
    </location>
</feature>
<gene>
    <name type="primary">Smyd3</name>
    <name type="synonym">Zmynd1</name>
</gene>
<name>SMYD3_MOUSE</name>
<sequence length="428" mass="49126">MEALKVEKFTTANRGNGLRAVAPLRPGELLFRSDPLAYTVCKGSRGVVCDRCLLGKEKLMRCSQCRIAKYCSAKCQKKAWPDHRRECSCLKSCKPRYPPDSVRLLGRVIVKLMDEKPSESEKLYSFYDLESNISKLTEDKKEGLRQLAMTFQHFMREEIQDASQLPPSFDLFEAFAKVICNSFTICNAEMQEVGVGLYPSMSLLNHSCDPNCSIVFNGPHLLLRAVREIEAGEELTICYLDMLMTSEERRKQLRDQYCFECDCIRCQTQDKDADMLTGDEQIWKEVQESLKKIEELKAHWKWEQVLALCQAIINSNSNRLPDINIYQLKVLDCAMDACINLGMLEEALFYAMRTMEPYRIFFPGSHPVRGVQVMKVGKLQLHQGMFPQAMKNLRLAFDIMKVTHGREHSLIEDLILLLEECDANIRAS</sequence>